<reference key="1">
    <citation type="journal article" date="1999" name="Nat. Genet.">
        <title>Comparative genomes of Chlamydia pneumoniae and C. trachomatis.</title>
        <authorList>
            <person name="Kalman S."/>
            <person name="Mitchell W.P."/>
            <person name="Marathe R."/>
            <person name="Lammel C.J."/>
            <person name="Fan J."/>
            <person name="Hyman R.W."/>
            <person name="Olinger L."/>
            <person name="Grimwood J."/>
            <person name="Davis R.W."/>
            <person name="Stephens R.S."/>
        </authorList>
    </citation>
    <scope>NUCLEOTIDE SEQUENCE [LARGE SCALE GENOMIC DNA]</scope>
    <source>
        <strain>CWL029</strain>
    </source>
</reference>
<reference key="2">
    <citation type="journal article" date="2000" name="Nucleic Acids Res.">
        <title>Genome sequences of Chlamydia trachomatis MoPn and Chlamydia pneumoniae AR39.</title>
        <authorList>
            <person name="Read T.D."/>
            <person name="Brunham R.C."/>
            <person name="Shen C."/>
            <person name="Gill S.R."/>
            <person name="Heidelberg J.F."/>
            <person name="White O."/>
            <person name="Hickey E.K."/>
            <person name="Peterson J.D."/>
            <person name="Utterback T.R."/>
            <person name="Berry K.J."/>
            <person name="Bass S."/>
            <person name="Linher K.D."/>
            <person name="Weidman J.F."/>
            <person name="Khouri H.M."/>
            <person name="Craven B."/>
            <person name="Bowman C."/>
            <person name="Dodson R.J."/>
            <person name="Gwinn M.L."/>
            <person name="Nelson W.C."/>
            <person name="DeBoy R.T."/>
            <person name="Kolonay J.F."/>
            <person name="McClarty G."/>
            <person name="Salzberg S.L."/>
            <person name="Eisen J.A."/>
            <person name="Fraser C.M."/>
        </authorList>
    </citation>
    <scope>NUCLEOTIDE SEQUENCE [LARGE SCALE GENOMIC DNA]</scope>
    <source>
        <strain>AR39</strain>
    </source>
</reference>
<reference key="3">
    <citation type="journal article" date="2000" name="Nucleic Acids Res.">
        <title>Comparison of whole genome sequences of Chlamydia pneumoniae J138 from Japan and CWL029 from USA.</title>
        <authorList>
            <person name="Shirai M."/>
            <person name="Hirakawa H."/>
            <person name="Kimoto M."/>
            <person name="Tabuchi M."/>
            <person name="Kishi F."/>
            <person name="Ouchi K."/>
            <person name="Shiba T."/>
            <person name="Ishii K."/>
            <person name="Hattori M."/>
            <person name="Kuhara S."/>
            <person name="Nakazawa T."/>
        </authorList>
    </citation>
    <scope>NUCLEOTIDE SEQUENCE [LARGE SCALE GENOMIC DNA]</scope>
    <source>
        <strain>J138</strain>
    </source>
</reference>
<reference key="4">
    <citation type="submission" date="2002-05" db="EMBL/GenBank/DDBJ databases">
        <title>The genome sequence of Chlamydia pneumoniae TW183 and comparison with other Chlamydia strains based on whole genome sequence analysis.</title>
        <authorList>
            <person name="Geng M.M."/>
            <person name="Schuhmacher A."/>
            <person name="Muehldorfer I."/>
            <person name="Bensch K.W."/>
            <person name="Schaefer K.P."/>
            <person name="Schneider S."/>
            <person name="Pohl T."/>
            <person name="Essig A."/>
            <person name="Marre R."/>
            <person name="Melchers K."/>
        </authorList>
    </citation>
    <scope>NUCLEOTIDE SEQUENCE [LARGE SCALE GENOMIC DNA]</scope>
    <source>
        <strain>TW-183</strain>
    </source>
</reference>
<proteinExistence type="inferred from homology"/>
<comment type="function">
    <text evidence="1">This is one of the proteins that bind and probably mediate the attachment of the 5S RNA into the large ribosomal subunit, where it forms part of the central protuberance.</text>
</comment>
<comment type="subunit">
    <text evidence="1">Part of the 50S ribosomal subunit; part of the 5S rRNA/L5/L18/L25 subcomplex. Contacts the 5S and 23S rRNAs.</text>
</comment>
<comment type="similarity">
    <text evidence="1">Belongs to the universal ribosomal protein uL18 family.</text>
</comment>
<organism>
    <name type="scientific">Chlamydia pneumoniae</name>
    <name type="common">Chlamydophila pneumoniae</name>
    <dbReference type="NCBI Taxonomy" id="83558"/>
    <lineage>
        <taxon>Bacteria</taxon>
        <taxon>Pseudomonadati</taxon>
        <taxon>Chlamydiota</taxon>
        <taxon>Chlamydiia</taxon>
        <taxon>Chlamydiales</taxon>
        <taxon>Chlamydiaceae</taxon>
        <taxon>Chlamydia/Chlamydophila group</taxon>
        <taxon>Chlamydia</taxon>
    </lineage>
</organism>
<feature type="chain" id="PRO_0000131244" description="Large ribosomal subunit protein uL18">
    <location>
        <begin position="1"/>
        <end position="123"/>
    </location>
</feature>
<protein>
    <recommendedName>
        <fullName evidence="1">Large ribosomal subunit protein uL18</fullName>
    </recommendedName>
    <alternativeName>
        <fullName evidence="2">50S ribosomal protein L18</fullName>
    </alternativeName>
</protein>
<evidence type="ECO:0000255" key="1">
    <source>
        <dbReference type="HAMAP-Rule" id="MF_01337"/>
    </source>
</evidence>
<evidence type="ECO:0000305" key="2"/>
<dbReference type="EMBL" id="AE001363">
    <property type="protein sequence ID" value="AAD18771.1"/>
    <property type="molecule type" value="Genomic_DNA"/>
</dbReference>
<dbReference type="EMBL" id="AE002161">
    <property type="protein sequence ID" value="AAF37998.1"/>
    <property type="molecule type" value="Genomic_DNA"/>
</dbReference>
<dbReference type="EMBL" id="BA000008">
    <property type="protein sequence ID" value="BAA98839.1"/>
    <property type="molecule type" value="Genomic_DNA"/>
</dbReference>
<dbReference type="EMBL" id="AE009440">
    <property type="protein sequence ID" value="AAP98587.1"/>
    <property type="molecule type" value="Genomic_DNA"/>
</dbReference>
<dbReference type="PIR" id="B72054">
    <property type="entry name" value="B72054"/>
</dbReference>
<dbReference type="PIR" id="E86569">
    <property type="entry name" value="E86569"/>
</dbReference>
<dbReference type="RefSeq" id="NP_224828.1">
    <property type="nucleotide sequence ID" value="NC_000922.1"/>
</dbReference>
<dbReference type="RefSeq" id="WP_010883270.1">
    <property type="nucleotide sequence ID" value="NZ_LN847257.1"/>
</dbReference>
<dbReference type="SMR" id="Q9Z7S2"/>
<dbReference type="STRING" id="406984.CPK_ORF00032"/>
<dbReference type="GeneID" id="45050682"/>
<dbReference type="KEGG" id="cpa:CP_0115"/>
<dbReference type="KEGG" id="cpj:rl18"/>
<dbReference type="KEGG" id="cpn:CPn_0632"/>
<dbReference type="KEGG" id="cpt:CpB0658"/>
<dbReference type="PATRIC" id="fig|115713.3.peg.702"/>
<dbReference type="eggNOG" id="COG0256">
    <property type="taxonomic scope" value="Bacteria"/>
</dbReference>
<dbReference type="HOGENOM" id="CLU_098841_0_1_0"/>
<dbReference type="OMA" id="NKQIYAQ"/>
<dbReference type="OrthoDB" id="9810939at2"/>
<dbReference type="Proteomes" id="UP000000583">
    <property type="component" value="Chromosome"/>
</dbReference>
<dbReference type="Proteomes" id="UP000000801">
    <property type="component" value="Chromosome"/>
</dbReference>
<dbReference type="GO" id="GO:0022625">
    <property type="term" value="C:cytosolic large ribosomal subunit"/>
    <property type="evidence" value="ECO:0007669"/>
    <property type="project" value="TreeGrafter"/>
</dbReference>
<dbReference type="GO" id="GO:0008097">
    <property type="term" value="F:5S rRNA binding"/>
    <property type="evidence" value="ECO:0007669"/>
    <property type="project" value="TreeGrafter"/>
</dbReference>
<dbReference type="GO" id="GO:0003735">
    <property type="term" value="F:structural constituent of ribosome"/>
    <property type="evidence" value="ECO:0007669"/>
    <property type="project" value="InterPro"/>
</dbReference>
<dbReference type="GO" id="GO:0006412">
    <property type="term" value="P:translation"/>
    <property type="evidence" value="ECO:0007669"/>
    <property type="project" value="UniProtKB-UniRule"/>
</dbReference>
<dbReference type="CDD" id="cd00432">
    <property type="entry name" value="Ribosomal_L18_L5e"/>
    <property type="match status" value="1"/>
</dbReference>
<dbReference type="FunFam" id="3.30.420.100:FF:000001">
    <property type="entry name" value="50S ribosomal protein L18"/>
    <property type="match status" value="1"/>
</dbReference>
<dbReference type="Gene3D" id="3.30.420.100">
    <property type="match status" value="1"/>
</dbReference>
<dbReference type="HAMAP" id="MF_01337_B">
    <property type="entry name" value="Ribosomal_uL18_B"/>
    <property type="match status" value="1"/>
</dbReference>
<dbReference type="InterPro" id="IPR004389">
    <property type="entry name" value="Ribosomal_uL18_bac-type"/>
</dbReference>
<dbReference type="InterPro" id="IPR005484">
    <property type="entry name" value="Ribosomal_uL18_bac/euk"/>
</dbReference>
<dbReference type="NCBIfam" id="TIGR00060">
    <property type="entry name" value="L18_bact"/>
    <property type="match status" value="1"/>
</dbReference>
<dbReference type="PANTHER" id="PTHR12899">
    <property type="entry name" value="39S RIBOSOMAL PROTEIN L18, MITOCHONDRIAL"/>
    <property type="match status" value="1"/>
</dbReference>
<dbReference type="PANTHER" id="PTHR12899:SF3">
    <property type="entry name" value="LARGE RIBOSOMAL SUBUNIT PROTEIN UL18M"/>
    <property type="match status" value="1"/>
</dbReference>
<dbReference type="Pfam" id="PF00861">
    <property type="entry name" value="Ribosomal_L18p"/>
    <property type="match status" value="1"/>
</dbReference>
<dbReference type="SUPFAM" id="SSF53137">
    <property type="entry name" value="Translational machinery components"/>
    <property type="match status" value="1"/>
</dbReference>
<name>RL18_CHLPN</name>
<sequence>MESSLCKKSLMKRRRALRVRKVLKGSPTKPRLSVVKTNKHIYVQLIDDSIGKTLASVSTLSKLNKSQGLTKKNQEVAKVLGTQIAELGKNLQLDRVVFDRGPFKYHGIVSMVADGAREGGLQF</sequence>
<keyword id="KW-0687">Ribonucleoprotein</keyword>
<keyword id="KW-0689">Ribosomal protein</keyword>
<keyword id="KW-0694">RNA-binding</keyword>
<keyword id="KW-0699">rRNA-binding</keyword>
<gene>
    <name evidence="1" type="primary">rplR</name>
    <name type="synonym">rl18</name>
    <name type="ordered locus">CPn_0632</name>
    <name type="ordered locus">CP_0115</name>
    <name type="ordered locus">CpB0658</name>
</gene>
<accession>Q9Z7S2</accession>
<accession>Q9JSC7</accession>